<comment type="function">
    <text evidence="2">Involved in base excision repair of DNA damaged by oxidation or by mutagenic agents. Acts as a DNA glycosylase that recognizes and removes damaged bases. Has a preference for oxidized purines, such as 7,8-dihydro-8-oxoguanine (8-oxoG). Has AP (apurinic/apyrimidinic) lyase activity and introduces nicks in the DNA strand. Cleaves the DNA backbone by beta-delta elimination to generate a single-strand break at the site of the removed base with both 3'- and 5'-phosphates.</text>
</comment>
<comment type="catalytic activity">
    <reaction evidence="2">
        <text>Hydrolysis of DNA containing ring-opened 7-methylguanine residues, releasing 2,6-diamino-4-hydroxy-5-(N-methyl)formamidopyrimidine.</text>
        <dbReference type="EC" id="3.2.2.23"/>
    </reaction>
</comment>
<comment type="catalytic activity">
    <reaction evidence="2">
        <text>2'-deoxyribonucleotide-(2'-deoxyribose 5'-phosphate)-2'-deoxyribonucleotide-DNA = a 3'-end 2'-deoxyribonucleotide-(2,3-dehydro-2,3-deoxyribose 5'-phosphate)-DNA + a 5'-end 5'-phospho-2'-deoxyribonucleoside-DNA + H(+)</text>
        <dbReference type="Rhea" id="RHEA:66592"/>
        <dbReference type="Rhea" id="RHEA-COMP:13180"/>
        <dbReference type="Rhea" id="RHEA-COMP:16897"/>
        <dbReference type="Rhea" id="RHEA-COMP:17067"/>
        <dbReference type="ChEBI" id="CHEBI:15378"/>
        <dbReference type="ChEBI" id="CHEBI:136412"/>
        <dbReference type="ChEBI" id="CHEBI:157695"/>
        <dbReference type="ChEBI" id="CHEBI:167181"/>
        <dbReference type="EC" id="4.2.99.18"/>
    </reaction>
</comment>
<comment type="cofactor">
    <cofactor evidence="2">
        <name>Zn(2+)</name>
        <dbReference type="ChEBI" id="CHEBI:29105"/>
    </cofactor>
    <text evidence="2">Binds 1 zinc ion per subunit.</text>
</comment>
<comment type="subunit">
    <text evidence="2">Monomer.</text>
</comment>
<comment type="similarity">
    <text evidence="2">Belongs to the FPG family.</text>
</comment>
<accession>A1AW02</accession>
<gene>
    <name evidence="2" type="primary">mutM</name>
    <name evidence="2" type="synonym">fpg</name>
    <name type="ordered locus">Rmag_0332</name>
</gene>
<sequence length="269" mass="30578">MPELPEVEITKRGLVPLIINQEVSRVILHRENLRWAIPKNLITILANQKIKTIKRRAKYLLIKFEAGTLIIHLGMSGSIKVVDIKTPLLKHEHFELQFNNGTSMRLNDPRRFGAVLFSKDGSHKLLDSLGVEPLEAVFNNGYLYQKSRNKRKNIKDFIMDSKIVVGVGNIYACESLFMASINPQRKAGNVSKTRYKILTQCIKDILTQAIKAGGTTLQDFSQVDGNPGYFTQTLSVYGCENKTCHFCKSKIIKIVQNQRSTFYCRKCQT</sequence>
<dbReference type="EC" id="3.2.2.23" evidence="2"/>
<dbReference type="EC" id="4.2.99.18" evidence="2"/>
<dbReference type="EMBL" id="CP000488">
    <property type="protein sequence ID" value="ABL02109.1"/>
    <property type="molecule type" value="Genomic_DNA"/>
</dbReference>
<dbReference type="RefSeq" id="WP_011737734.1">
    <property type="nucleotide sequence ID" value="NC_008610.1"/>
</dbReference>
<dbReference type="SMR" id="A1AW02"/>
<dbReference type="STRING" id="413404.Rmag_0332"/>
<dbReference type="KEGG" id="rma:Rmag_0332"/>
<dbReference type="eggNOG" id="COG0266">
    <property type="taxonomic scope" value="Bacteria"/>
</dbReference>
<dbReference type="HOGENOM" id="CLU_038423_1_1_6"/>
<dbReference type="OrthoDB" id="9800855at2"/>
<dbReference type="Proteomes" id="UP000002587">
    <property type="component" value="Chromosome"/>
</dbReference>
<dbReference type="GO" id="GO:0034039">
    <property type="term" value="F:8-oxo-7,8-dihydroguanine DNA N-glycosylase activity"/>
    <property type="evidence" value="ECO:0007669"/>
    <property type="project" value="TreeGrafter"/>
</dbReference>
<dbReference type="GO" id="GO:0140078">
    <property type="term" value="F:class I DNA-(apurinic or apyrimidinic site) endonuclease activity"/>
    <property type="evidence" value="ECO:0007669"/>
    <property type="project" value="UniProtKB-EC"/>
</dbReference>
<dbReference type="GO" id="GO:0003684">
    <property type="term" value="F:damaged DNA binding"/>
    <property type="evidence" value="ECO:0007669"/>
    <property type="project" value="InterPro"/>
</dbReference>
<dbReference type="GO" id="GO:0008270">
    <property type="term" value="F:zinc ion binding"/>
    <property type="evidence" value="ECO:0007669"/>
    <property type="project" value="UniProtKB-UniRule"/>
</dbReference>
<dbReference type="GO" id="GO:0006284">
    <property type="term" value="P:base-excision repair"/>
    <property type="evidence" value="ECO:0007669"/>
    <property type="project" value="InterPro"/>
</dbReference>
<dbReference type="CDD" id="cd08966">
    <property type="entry name" value="EcFpg-like_N"/>
    <property type="match status" value="1"/>
</dbReference>
<dbReference type="FunFam" id="1.10.8.50:FF:000003">
    <property type="entry name" value="Formamidopyrimidine-DNA glycosylase"/>
    <property type="match status" value="1"/>
</dbReference>
<dbReference type="FunFam" id="3.20.190.10:FF:000001">
    <property type="entry name" value="Formamidopyrimidine-DNA glycosylase"/>
    <property type="match status" value="1"/>
</dbReference>
<dbReference type="Gene3D" id="1.10.8.50">
    <property type="match status" value="1"/>
</dbReference>
<dbReference type="Gene3D" id="3.20.190.10">
    <property type="entry name" value="MutM-like, N-terminal"/>
    <property type="match status" value="1"/>
</dbReference>
<dbReference type="HAMAP" id="MF_00103">
    <property type="entry name" value="Fapy_DNA_glycosyl"/>
    <property type="match status" value="1"/>
</dbReference>
<dbReference type="InterPro" id="IPR015886">
    <property type="entry name" value="DNA_glyclase/AP_lyase_DNA-bd"/>
</dbReference>
<dbReference type="InterPro" id="IPR015887">
    <property type="entry name" value="DNA_glyclase_Znf_dom_DNA_BS"/>
</dbReference>
<dbReference type="InterPro" id="IPR020629">
    <property type="entry name" value="Formamido-pyr_DNA_Glyclase"/>
</dbReference>
<dbReference type="InterPro" id="IPR012319">
    <property type="entry name" value="FPG_cat"/>
</dbReference>
<dbReference type="InterPro" id="IPR035937">
    <property type="entry name" value="MutM-like_N-ter"/>
</dbReference>
<dbReference type="InterPro" id="IPR010979">
    <property type="entry name" value="Ribosomal_uS13-like_H2TH"/>
</dbReference>
<dbReference type="InterPro" id="IPR000214">
    <property type="entry name" value="Znf_DNA_glyclase/AP_lyase"/>
</dbReference>
<dbReference type="NCBIfam" id="TIGR00577">
    <property type="entry name" value="fpg"/>
    <property type="match status" value="1"/>
</dbReference>
<dbReference type="NCBIfam" id="NF002211">
    <property type="entry name" value="PRK01103.1"/>
    <property type="match status" value="1"/>
</dbReference>
<dbReference type="PANTHER" id="PTHR22993">
    <property type="entry name" value="FORMAMIDOPYRIMIDINE-DNA GLYCOSYLASE"/>
    <property type="match status" value="1"/>
</dbReference>
<dbReference type="PANTHER" id="PTHR22993:SF9">
    <property type="entry name" value="FORMAMIDOPYRIMIDINE-DNA GLYCOSYLASE"/>
    <property type="match status" value="1"/>
</dbReference>
<dbReference type="Pfam" id="PF01149">
    <property type="entry name" value="Fapy_DNA_glyco"/>
    <property type="match status" value="1"/>
</dbReference>
<dbReference type="Pfam" id="PF06831">
    <property type="entry name" value="H2TH"/>
    <property type="match status" value="1"/>
</dbReference>
<dbReference type="SMART" id="SM00898">
    <property type="entry name" value="Fapy_DNA_glyco"/>
    <property type="match status" value="1"/>
</dbReference>
<dbReference type="SMART" id="SM01232">
    <property type="entry name" value="H2TH"/>
    <property type="match status" value="1"/>
</dbReference>
<dbReference type="SUPFAM" id="SSF57716">
    <property type="entry name" value="Glucocorticoid receptor-like (DNA-binding domain)"/>
    <property type="match status" value="1"/>
</dbReference>
<dbReference type="SUPFAM" id="SSF81624">
    <property type="entry name" value="N-terminal domain of MutM-like DNA repair proteins"/>
    <property type="match status" value="1"/>
</dbReference>
<dbReference type="SUPFAM" id="SSF46946">
    <property type="entry name" value="S13-like H2TH domain"/>
    <property type="match status" value="1"/>
</dbReference>
<dbReference type="PROSITE" id="PS51068">
    <property type="entry name" value="FPG_CAT"/>
    <property type="match status" value="1"/>
</dbReference>
<dbReference type="PROSITE" id="PS01242">
    <property type="entry name" value="ZF_FPG_1"/>
    <property type="match status" value="1"/>
</dbReference>
<dbReference type="PROSITE" id="PS51066">
    <property type="entry name" value="ZF_FPG_2"/>
    <property type="match status" value="1"/>
</dbReference>
<keyword id="KW-0227">DNA damage</keyword>
<keyword id="KW-0234">DNA repair</keyword>
<keyword id="KW-0238">DNA-binding</keyword>
<keyword id="KW-0326">Glycosidase</keyword>
<keyword id="KW-0378">Hydrolase</keyword>
<keyword id="KW-0456">Lyase</keyword>
<keyword id="KW-0479">Metal-binding</keyword>
<keyword id="KW-0511">Multifunctional enzyme</keyword>
<keyword id="KW-0862">Zinc</keyword>
<keyword id="KW-0863">Zinc-finger</keyword>
<proteinExistence type="inferred from homology"/>
<feature type="initiator methionine" description="Removed" evidence="1">
    <location>
        <position position="1"/>
    </location>
</feature>
<feature type="chain" id="PRO_1000008766" description="Formamidopyrimidine-DNA glycosylase">
    <location>
        <begin position="2"/>
        <end position="269"/>
    </location>
</feature>
<feature type="zinc finger region" description="FPG-type" evidence="2">
    <location>
        <begin position="235"/>
        <end position="269"/>
    </location>
</feature>
<feature type="active site" description="Schiff-base intermediate with DNA" evidence="2">
    <location>
        <position position="2"/>
    </location>
</feature>
<feature type="active site" description="Proton donor" evidence="2">
    <location>
        <position position="3"/>
    </location>
</feature>
<feature type="active site" description="Proton donor; for beta-elimination activity" evidence="2">
    <location>
        <position position="58"/>
    </location>
</feature>
<feature type="active site" description="Proton donor; for delta-elimination activity" evidence="2">
    <location>
        <position position="259"/>
    </location>
</feature>
<feature type="binding site" evidence="2">
    <location>
        <position position="91"/>
    </location>
    <ligand>
        <name>DNA</name>
        <dbReference type="ChEBI" id="CHEBI:16991"/>
    </ligand>
</feature>
<feature type="binding site" evidence="2">
    <location>
        <position position="110"/>
    </location>
    <ligand>
        <name>DNA</name>
        <dbReference type="ChEBI" id="CHEBI:16991"/>
    </ligand>
</feature>
<feature type="binding site" evidence="2">
    <location>
        <position position="150"/>
    </location>
    <ligand>
        <name>DNA</name>
        <dbReference type="ChEBI" id="CHEBI:16991"/>
    </ligand>
</feature>
<protein>
    <recommendedName>
        <fullName evidence="2">Formamidopyrimidine-DNA glycosylase</fullName>
        <shortName evidence="2">Fapy-DNA glycosylase</shortName>
        <ecNumber evidence="2">3.2.2.23</ecNumber>
    </recommendedName>
    <alternativeName>
        <fullName evidence="2">DNA-(apurinic or apyrimidinic site) lyase MutM</fullName>
        <shortName evidence="2">AP lyase MutM</shortName>
        <ecNumber evidence="2">4.2.99.18</ecNumber>
    </alternativeName>
</protein>
<name>FPG_RUTMC</name>
<organism>
    <name type="scientific">Ruthia magnifica subsp. Calyptogena magnifica</name>
    <dbReference type="NCBI Taxonomy" id="413404"/>
    <lineage>
        <taxon>Bacteria</taxon>
        <taxon>Pseudomonadati</taxon>
        <taxon>Pseudomonadota</taxon>
        <taxon>Gammaproteobacteria</taxon>
        <taxon>Candidatus Pseudothioglobaceae</taxon>
        <taxon>Candidatus Ruthturnera</taxon>
    </lineage>
</organism>
<evidence type="ECO:0000250" key="1"/>
<evidence type="ECO:0000255" key="2">
    <source>
        <dbReference type="HAMAP-Rule" id="MF_00103"/>
    </source>
</evidence>
<reference key="1">
    <citation type="journal article" date="2007" name="Science">
        <title>The Calyptogena magnifica chemoautotrophic symbiont genome.</title>
        <authorList>
            <person name="Newton I.L.G."/>
            <person name="Woyke T."/>
            <person name="Auchtung T.A."/>
            <person name="Dilly G.F."/>
            <person name="Dutton R.J."/>
            <person name="Fisher M.C."/>
            <person name="Fontanez K.M."/>
            <person name="Lau E."/>
            <person name="Stewart F.J."/>
            <person name="Richardson P.M."/>
            <person name="Barry K.W."/>
            <person name="Saunders E."/>
            <person name="Detter J.C."/>
            <person name="Wu D."/>
            <person name="Eisen J.A."/>
            <person name="Cavanaugh C.M."/>
        </authorList>
    </citation>
    <scope>NUCLEOTIDE SEQUENCE [LARGE SCALE GENOMIC DNA]</scope>
</reference>